<gene>
    <name evidence="1" type="primary">cdd</name>
    <name type="ordered locus">Ent638_2746</name>
</gene>
<comment type="function">
    <text evidence="1">This enzyme scavenges exogenous and endogenous cytidine and 2'-deoxycytidine for UMP synthesis.</text>
</comment>
<comment type="catalytic activity">
    <reaction evidence="1">
        <text>cytidine + H2O + H(+) = uridine + NH4(+)</text>
        <dbReference type="Rhea" id="RHEA:16069"/>
        <dbReference type="ChEBI" id="CHEBI:15377"/>
        <dbReference type="ChEBI" id="CHEBI:15378"/>
        <dbReference type="ChEBI" id="CHEBI:16704"/>
        <dbReference type="ChEBI" id="CHEBI:17562"/>
        <dbReference type="ChEBI" id="CHEBI:28938"/>
        <dbReference type="EC" id="3.5.4.5"/>
    </reaction>
</comment>
<comment type="catalytic activity">
    <reaction evidence="1">
        <text>2'-deoxycytidine + H2O + H(+) = 2'-deoxyuridine + NH4(+)</text>
        <dbReference type="Rhea" id="RHEA:13433"/>
        <dbReference type="ChEBI" id="CHEBI:15377"/>
        <dbReference type="ChEBI" id="CHEBI:15378"/>
        <dbReference type="ChEBI" id="CHEBI:15698"/>
        <dbReference type="ChEBI" id="CHEBI:16450"/>
        <dbReference type="ChEBI" id="CHEBI:28938"/>
        <dbReference type="EC" id="3.5.4.5"/>
    </reaction>
</comment>
<comment type="cofactor">
    <cofactor evidence="1">
        <name>Zn(2+)</name>
        <dbReference type="ChEBI" id="CHEBI:29105"/>
    </cofactor>
    <text evidence="1">Binds 1 zinc ion.</text>
</comment>
<comment type="subunit">
    <text evidence="1">Homodimer.</text>
</comment>
<comment type="similarity">
    <text evidence="1">Belongs to the cytidine and deoxycytidylate deaminase family.</text>
</comment>
<sequence length="294" mass="31572">MHPRFQSAFAQLAENLQSALAPVLADEHFPALLTAEQVTMLKQATGLDEDALAFALLPLAAACARADLSHFNVGAIARGVSGTWYFGGNMEFLGATMQQTVHAEQSAISHAWLRGEHALNAITVNYTPCGHCRQFMNELNSGLELRINLPGREPHTLGDYLPDAFGPKDLDIKTLLMDEQNHGYALTGDELTQSAIAAANKSHAPYSQSPSGVALECRDGRIFSGSYAENAAFNPTLPPLQGALNLLSLNGYDYPDIQRAILAEKADAPLIQWDATAATLKALGCSNIDRTLLA</sequence>
<keyword id="KW-0378">Hydrolase</keyword>
<keyword id="KW-0479">Metal-binding</keyword>
<keyword id="KW-0862">Zinc</keyword>
<proteinExistence type="inferred from homology"/>
<evidence type="ECO:0000255" key="1">
    <source>
        <dbReference type="HAMAP-Rule" id="MF_01558"/>
    </source>
</evidence>
<evidence type="ECO:0000255" key="2">
    <source>
        <dbReference type="PROSITE-ProRule" id="PRU01083"/>
    </source>
</evidence>
<dbReference type="EC" id="3.5.4.5" evidence="1"/>
<dbReference type="EMBL" id="CP000653">
    <property type="protein sequence ID" value="ABP61411.1"/>
    <property type="molecule type" value="Genomic_DNA"/>
</dbReference>
<dbReference type="RefSeq" id="WP_015959744.1">
    <property type="nucleotide sequence ID" value="NC_009436.1"/>
</dbReference>
<dbReference type="SMR" id="A4WCI1"/>
<dbReference type="STRING" id="399742.Ent638_2746"/>
<dbReference type="KEGG" id="ent:Ent638_2746"/>
<dbReference type="eggNOG" id="COG0295">
    <property type="taxonomic scope" value="Bacteria"/>
</dbReference>
<dbReference type="HOGENOM" id="CLU_052424_0_0_6"/>
<dbReference type="OrthoDB" id="9795347at2"/>
<dbReference type="Proteomes" id="UP000000230">
    <property type="component" value="Chromosome"/>
</dbReference>
<dbReference type="GO" id="GO:0005829">
    <property type="term" value="C:cytosol"/>
    <property type="evidence" value="ECO:0007669"/>
    <property type="project" value="TreeGrafter"/>
</dbReference>
<dbReference type="GO" id="GO:0004126">
    <property type="term" value="F:cytidine deaminase activity"/>
    <property type="evidence" value="ECO:0007669"/>
    <property type="project" value="UniProtKB-UniRule"/>
</dbReference>
<dbReference type="GO" id="GO:0042802">
    <property type="term" value="F:identical protein binding"/>
    <property type="evidence" value="ECO:0007669"/>
    <property type="project" value="UniProtKB-ARBA"/>
</dbReference>
<dbReference type="GO" id="GO:0008270">
    <property type="term" value="F:zinc ion binding"/>
    <property type="evidence" value="ECO:0007669"/>
    <property type="project" value="UniProtKB-UniRule"/>
</dbReference>
<dbReference type="GO" id="GO:0009972">
    <property type="term" value="P:cytidine deamination"/>
    <property type="evidence" value="ECO:0007669"/>
    <property type="project" value="InterPro"/>
</dbReference>
<dbReference type="CDD" id="cd01283">
    <property type="entry name" value="cytidine_deaminase"/>
    <property type="match status" value="2"/>
</dbReference>
<dbReference type="FunFam" id="3.40.140.10:FF:000006">
    <property type="entry name" value="Cytidine deaminase"/>
    <property type="match status" value="1"/>
</dbReference>
<dbReference type="FunFam" id="3.40.140.10:FF:000007">
    <property type="entry name" value="Cytidine deaminase"/>
    <property type="match status" value="1"/>
</dbReference>
<dbReference type="Gene3D" id="3.40.140.10">
    <property type="entry name" value="Cytidine Deaminase, domain 2"/>
    <property type="match status" value="2"/>
</dbReference>
<dbReference type="HAMAP" id="MF_01558">
    <property type="entry name" value="Cyt_deam"/>
    <property type="match status" value="1"/>
</dbReference>
<dbReference type="InterPro" id="IPR016192">
    <property type="entry name" value="APOBEC/CMP_deaminase_Zn-bd"/>
</dbReference>
<dbReference type="InterPro" id="IPR002125">
    <property type="entry name" value="CMP_dCMP_dom"/>
</dbReference>
<dbReference type="InterPro" id="IPR013171">
    <property type="entry name" value="Cyd/dCyd_deaminase_Zn-bd"/>
</dbReference>
<dbReference type="InterPro" id="IPR050202">
    <property type="entry name" value="Cyt/Deoxycyt_deaminase"/>
</dbReference>
<dbReference type="InterPro" id="IPR006263">
    <property type="entry name" value="Cyt_deam_dimer"/>
</dbReference>
<dbReference type="InterPro" id="IPR016193">
    <property type="entry name" value="Cytidine_deaminase-like"/>
</dbReference>
<dbReference type="InterPro" id="IPR020797">
    <property type="entry name" value="Cytidine_deaminase_bacteria"/>
</dbReference>
<dbReference type="NCBIfam" id="TIGR01355">
    <property type="entry name" value="cyt_deam_dimer"/>
    <property type="match status" value="1"/>
</dbReference>
<dbReference type="NCBIfam" id="NF006537">
    <property type="entry name" value="PRK09027.1"/>
    <property type="match status" value="1"/>
</dbReference>
<dbReference type="PANTHER" id="PTHR11644">
    <property type="entry name" value="CYTIDINE DEAMINASE"/>
    <property type="match status" value="1"/>
</dbReference>
<dbReference type="PANTHER" id="PTHR11644:SF2">
    <property type="entry name" value="CYTIDINE DEAMINASE"/>
    <property type="match status" value="1"/>
</dbReference>
<dbReference type="Pfam" id="PF00383">
    <property type="entry name" value="dCMP_cyt_deam_1"/>
    <property type="match status" value="1"/>
</dbReference>
<dbReference type="Pfam" id="PF08211">
    <property type="entry name" value="dCMP_cyt_deam_2"/>
    <property type="match status" value="1"/>
</dbReference>
<dbReference type="PIRSF" id="PIRSF006334">
    <property type="entry name" value="Cdd_plus_pseudo"/>
    <property type="match status" value="1"/>
</dbReference>
<dbReference type="SUPFAM" id="SSF53927">
    <property type="entry name" value="Cytidine deaminase-like"/>
    <property type="match status" value="2"/>
</dbReference>
<dbReference type="PROSITE" id="PS00903">
    <property type="entry name" value="CYT_DCMP_DEAMINASES_1"/>
    <property type="match status" value="1"/>
</dbReference>
<dbReference type="PROSITE" id="PS51747">
    <property type="entry name" value="CYT_DCMP_DEAMINASES_2"/>
    <property type="match status" value="2"/>
</dbReference>
<protein>
    <recommendedName>
        <fullName evidence="1">Cytidine deaminase</fullName>
        <ecNumber evidence="1">3.5.4.5</ecNumber>
    </recommendedName>
    <alternativeName>
        <fullName evidence="1">Cytidine aminohydrolase</fullName>
        <shortName evidence="1">CDA</shortName>
    </alternativeName>
</protein>
<feature type="chain" id="PRO_1000068953" description="Cytidine deaminase">
    <location>
        <begin position="1"/>
        <end position="294"/>
    </location>
</feature>
<feature type="domain" description="CMP/dCMP-type deaminase 1" evidence="2">
    <location>
        <begin position="48"/>
        <end position="168"/>
    </location>
</feature>
<feature type="domain" description="CMP/dCMP-type deaminase 2" evidence="2">
    <location>
        <begin position="186"/>
        <end position="294"/>
    </location>
</feature>
<feature type="active site" description="Proton donor" evidence="1">
    <location>
        <position position="104"/>
    </location>
</feature>
<feature type="binding site" evidence="1">
    <location>
        <begin position="89"/>
        <end position="91"/>
    </location>
    <ligand>
        <name>substrate</name>
    </ligand>
</feature>
<feature type="binding site" evidence="1">
    <location>
        <position position="102"/>
    </location>
    <ligand>
        <name>Zn(2+)</name>
        <dbReference type="ChEBI" id="CHEBI:29105"/>
        <note>catalytic</note>
    </ligand>
</feature>
<feature type="binding site" evidence="1">
    <location>
        <position position="129"/>
    </location>
    <ligand>
        <name>Zn(2+)</name>
        <dbReference type="ChEBI" id="CHEBI:29105"/>
        <note>catalytic</note>
    </ligand>
</feature>
<feature type="binding site" evidence="1">
    <location>
        <position position="132"/>
    </location>
    <ligand>
        <name>Zn(2+)</name>
        <dbReference type="ChEBI" id="CHEBI:29105"/>
        <note>catalytic</note>
    </ligand>
</feature>
<organism>
    <name type="scientific">Enterobacter sp. (strain 638)</name>
    <dbReference type="NCBI Taxonomy" id="399742"/>
    <lineage>
        <taxon>Bacteria</taxon>
        <taxon>Pseudomonadati</taxon>
        <taxon>Pseudomonadota</taxon>
        <taxon>Gammaproteobacteria</taxon>
        <taxon>Enterobacterales</taxon>
        <taxon>Enterobacteriaceae</taxon>
        <taxon>Enterobacter</taxon>
    </lineage>
</organism>
<name>CDD_ENT38</name>
<reference key="1">
    <citation type="journal article" date="2010" name="PLoS Genet.">
        <title>Genome sequence of the plant growth promoting endophytic bacterium Enterobacter sp. 638.</title>
        <authorList>
            <person name="Taghavi S."/>
            <person name="van der Lelie D."/>
            <person name="Hoffman A."/>
            <person name="Zhang Y.B."/>
            <person name="Walla M.D."/>
            <person name="Vangronsveld J."/>
            <person name="Newman L."/>
            <person name="Monchy S."/>
        </authorList>
    </citation>
    <scope>NUCLEOTIDE SEQUENCE [LARGE SCALE GENOMIC DNA]</scope>
    <source>
        <strain>638</strain>
    </source>
</reference>
<accession>A4WCI1</accession>